<comment type="function">
    <text evidence="1">Negatively regulates transcription of bacterial ribonucleotide reductase nrd genes and operons by binding to NrdR-boxes.</text>
</comment>
<comment type="cofactor">
    <cofactor evidence="1">
        <name>Zn(2+)</name>
        <dbReference type="ChEBI" id="CHEBI:29105"/>
    </cofactor>
    <text evidence="1">Binds 1 zinc ion.</text>
</comment>
<comment type="similarity">
    <text evidence="1">Belongs to the NrdR family.</text>
</comment>
<name>NRDR_MYXXD</name>
<evidence type="ECO:0000255" key="1">
    <source>
        <dbReference type="HAMAP-Rule" id="MF_00440"/>
    </source>
</evidence>
<sequence>MRCPFCQDAENKVIDSRESHEGSVIRRRRECLTCKRRFTTYERVEELYPLIVKKDGRREAFDREKIVNGLKKACEKRPVSADQLEETVVAIERQLQGMGEKEVPSSVIGEEIMRRLRQLDEVAYVRFASVYRSFRDIAEFMDELKALREAEAREQRQAPPSAPVDKGG</sequence>
<proteinExistence type="inferred from homology"/>
<feature type="chain" id="PRO_0000264189" description="Transcriptional repressor NrdR">
    <location>
        <begin position="1"/>
        <end position="168"/>
    </location>
</feature>
<feature type="domain" description="ATP-cone" evidence="1">
    <location>
        <begin position="49"/>
        <end position="139"/>
    </location>
</feature>
<feature type="zinc finger region" evidence="1">
    <location>
        <begin position="3"/>
        <end position="34"/>
    </location>
</feature>
<keyword id="KW-0067">ATP-binding</keyword>
<keyword id="KW-0238">DNA-binding</keyword>
<keyword id="KW-0479">Metal-binding</keyword>
<keyword id="KW-0547">Nucleotide-binding</keyword>
<keyword id="KW-1185">Reference proteome</keyword>
<keyword id="KW-0678">Repressor</keyword>
<keyword id="KW-0804">Transcription</keyword>
<keyword id="KW-0805">Transcription regulation</keyword>
<keyword id="KW-0862">Zinc</keyword>
<keyword id="KW-0863">Zinc-finger</keyword>
<reference key="1">
    <citation type="journal article" date="2006" name="Proc. Natl. Acad. Sci. U.S.A.">
        <title>Evolution of sensory complexity recorded in a myxobacterial genome.</title>
        <authorList>
            <person name="Goldman B.S."/>
            <person name="Nierman W.C."/>
            <person name="Kaiser D."/>
            <person name="Slater S.C."/>
            <person name="Durkin A.S."/>
            <person name="Eisen J.A."/>
            <person name="Ronning C.M."/>
            <person name="Barbazuk W.B."/>
            <person name="Blanchard M."/>
            <person name="Field C."/>
            <person name="Halling C."/>
            <person name="Hinkle G."/>
            <person name="Iartchuk O."/>
            <person name="Kim H.S."/>
            <person name="Mackenzie C."/>
            <person name="Madupu R."/>
            <person name="Miller N."/>
            <person name="Shvartsbeyn A."/>
            <person name="Sullivan S.A."/>
            <person name="Vaudin M."/>
            <person name="Wiegand R."/>
            <person name="Kaplan H.B."/>
        </authorList>
    </citation>
    <scope>NUCLEOTIDE SEQUENCE [LARGE SCALE GENOMIC DNA]</scope>
    <source>
        <strain>DK1622</strain>
    </source>
</reference>
<accession>Q1D346</accession>
<dbReference type="EMBL" id="CP000113">
    <property type="protein sequence ID" value="ABF89909.1"/>
    <property type="molecule type" value="Genomic_DNA"/>
</dbReference>
<dbReference type="RefSeq" id="WP_011554752.1">
    <property type="nucleotide sequence ID" value="NC_008095.1"/>
</dbReference>
<dbReference type="SMR" id="Q1D346"/>
<dbReference type="STRING" id="246197.MXAN_4765"/>
<dbReference type="EnsemblBacteria" id="ABF89909">
    <property type="protein sequence ID" value="ABF89909"/>
    <property type="gene ID" value="MXAN_4765"/>
</dbReference>
<dbReference type="GeneID" id="41362064"/>
<dbReference type="KEGG" id="mxa:MXAN_4765"/>
<dbReference type="eggNOG" id="COG1327">
    <property type="taxonomic scope" value="Bacteria"/>
</dbReference>
<dbReference type="HOGENOM" id="CLU_108412_0_0_7"/>
<dbReference type="OrthoDB" id="9807461at2"/>
<dbReference type="Proteomes" id="UP000002402">
    <property type="component" value="Chromosome"/>
</dbReference>
<dbReference type="GO" id="GO:0005524">
    <property type="term" value="F:ATP binding"/>
    <property type="evidence" value="ECO:0007669"/>
    <property type="project" value="UniProtKB-KW"/>
</dbReference>
<dbReference type="GO" id="GO:0003677">
    <property type="term" value="F:DNA binding"/>
    <property type="evidence" value="ECO:0007669"/>
    <property type="project" value="UniProtKB-KW"/>
</dbReference>
<dbReference type="GO" id="GO:0008270">
    <property type="term" value="F:zinc ion binding"/>
    <property type="evidence" value="ECO:0007669"/>
    <property type="project" value="UniProtKB-UniRule"/>
</dbReference>
<dbReference type="GO" id="GO:0045892">
    <property type="term" value="P:negative regulation of DNA-templated transcription"/>
    <property type="evidence" value="ECO:0007669"/>
    <property type="project" value="UniProtKB-UniRule"/>
</dbReference>
<dbReference type="HAMAP" id="MF_00440">
    <property type="entry name" value="NrdR"/>
    <property type="match status" value="1"/>
</dbReference>
<dbReference type="InterPro" id="IPR005144">
    <property type="entry name" value="ATP-cone_dom"/>
</dbReference>
<dbReference type="InterPro" id="IPR055173">
    <property type="entry name" value="NrdR-like_N"/>
</dbReference>
<dbReference type="InterPro" id="IPR003796">
    <property type="entry name" value="RNR_NrdR-like"/>
</dbReference>
<dbReference type="NCBIfam" id="TIGR00244">
    <property type="entry name" value="transcriptional regulator NrdR"/>
    <property type="match status" value="1"/>
</dbReference>
<dbReference type="PANTHER" id="PTHR30455">
    <property type="entry name" value="TRANSCRIPTIONAL REPRESSOR NRDR"/>
    <property type="match status" value="1"/>
</dbReference>
<dbReference type="PANTHER" id="PTHR30455:SF2">
    <property type="entry name" value="TRANSCRIPTIONAL REPRESSOR NRDR"/>
    <property type="match status" value="1"/>
</dbReference>
<dbReference type="Pfam" id="PF03477">
    <property type="entry name" value="ATP-cone"/>
    <property type="match status" value="1"/>
</dbReference>
<dbReference type="Pfam" id="PF22811">
    <property type="entry name" value="Zn_ribbon_NrdR"/>
    <property type="match status" value="1"/>
</dbReference>
<dbReference type="PROSITE" id="PS51161">
    <property type="entry name" value="ATP_CONE"/>
    <property type="match status" value="1"/>
</dbReference>
<protein>
    <recommendedName>
        <fullName evidence="1">Transcriptional repressor NrdR</fullName>
    </recommendedName>
</protein>
<gene>
    <name evidence="1" type="primary">nrdR</name>
    <name type="ordered locus">MXAN_4765</name>
</gene>
<organism>
    <name type="scientific">Myxococcus xanthus (strain DK1622)</name>
    <dbReference type="NCBI Taxonomy" id="246197"/>
    <lineage>
        <taxon>Bacteria</taxon>
        <taxon>Pseudomonadati</taxon>
        <taxon>Myxococcota</taxon>
        <taxon>Myxococcia</taxon>
        <taxon>Myxococcales</taxon>
        <taxon>Cystobacterineae</taxon>
        <taxon>Myxococcaceae</taxon>
        <taxon>Myxococcus</taxon>
    </lineage>
</organism>